<organism>
    <name type="scientific">Mus musculus</name>
    <name type="common">Mouse</name>
    <dbReference type="NCBI Taxonomy" id="10090"/>
    <lineage>
        <taxon>Eukaryota</taxon>
        <taxon>Metazoa</taxon>
        <taxon>Chordata</taxon>
        <taxon>Craniata</taxon>
        <taxon>Vertebrata</taxon>
        <taxon>Euteleostomi</taxon>
        <taxon>Mammalia</taxon>
        <taxon>Eutheria</taxon>
        <taxon>Euarchontoglires</taxon>
        <taxon>Glires</taxon>
        <taxon>Rodentia</taxon>
        <taxon>Myomorpha</taxon>
        <taxon>Muroidea</taxon>
        <taxon>Muridae</taxon>
        <taxon>Murinae</taxon>
        <taxon>Mus</taxon>
        <taxon>Mus</taxon>
    </lineage>
</organism>
<sequence length="190" mass="21625">MSEPQGQELRAECPVCWNPFNNTFHTPKVLDCCHSFCVECLAHLSLVTPARRRLLCPLCRQPTVLASGQPVTDLPTDTAMLTLLRLEPHHVILEGHQLCLKDQPKSRYFLRQPRVYTLDLGAEPGSQTGLPQDTAPDTRPVPIPSHYSLRECVRNPHFRIFAYLMAVILSVTLLLIFSIFWTKQFFWGMG</sequence>
<protein>
    <recommendedName>
        <fullName>E3 ubiquitin-protein ligase RNF183</fullName>
        <ecNumber evidence="4">2.3.2.27</ecNumber>
    </recommendedName>
</protein>
<gene>
    <name type="primary">Rnf183</name>
</gene>
<reference key="1">
    <citation type="journal article" date="2005" name="Science">
        <title>The transcriptional landscape of the mammalian genome.</title>
        <authorList>
            <person name="Carninci P."/>
            <person name="Kasukawa T."/>
            <person name="Katayama S."/>
            <person name="Gough J."/>
            <person name="Frith M.C."/>
            <person name="Maeda N."/>
            <person name="Oyama R."/>
            <person name="Ravasi T."/>
            <person name="Lenhard B."/>
            <person name="Wells C."/>
            <person name="Kodzius R."/>
            <person name="Shimokawa K."/>
            <person name="Bajic V.B."/>
            <person name="Brenner S.E."/>
            <person name="Batalov S."/>
            <person name="Forrest A.R."/>
            <person name="Zavolan M."/>
            <person name="Davis M.J."/>
            <person name="Wilming L.G."/>
            <person name="Aidinis V."/>
            <person name="Allen J.E."/>
            <person name="Ambesi-Impiombato A."/>
            <person name="Apweiler R."/>
            <person name="Aturaliya R.N."/>
            <person name="Bailey T.L."/>
            <person name="Bansal M."/>
            <person name="Baxter L."/>
            <person name="Beisel K.W."/>
            <person name="Bersano T."/>
            <person name="Bono H."/>
            <person name="Chalk A.M."/>
            <person name="Chiu K.P."/>
            <person name="Choudhary V."/>
            <person name="Christoffels A."/>
            <person name="Clutterbuck D.R."/>
            <person name="Crowe M.L."/>
            <person name="Dalla E."/>
            <person name="Dalrymple B.P."/>
            <person name="de Bono B."/>
            <person name="Della Gatta G."/>
            <person name="di Bernardo D."/>
            <person name="Down T."/>
            <person name="Engstrom P."/>
            <person name="Fagiolini M."/>
            <person name="Faulkner G."/>
            <person name="Fletcher C.F."/>
            <person name="Fukushima T."/>
            <person name="Furuno M."/>
            <person name="Futaki S."/>
            <person name="Gariboldi M."/>
            <person name="Georgii-Hemming P."/>
            <person name="Gingeras T.R."/>
            <person name="Gojobori T."/>
            <person name="Green R.E."/>
            <person name="Gustincich S."/>
            <person name="Harbers M."/>
            <person name="Hayashi Y."/>
            <person name="Hensch T.K."/>
            <person name="Hirokawa N."/>
            <person name="Hill D."/>
            <person name="Huminiecki L."/>
            <person name="Iacono M."/>
            <person name="Ikeo K."/>
            <person name="Iwama A."/>
            <person name="Ishikawa T."/>
            <person name="Jakt M."/>
            <person name="Kanapin A."/>
            <person name="Katoh M."/>
            <person name="Kawasawa Y."/>
            <person name="Kelso J."/>
            <person name="Kitamura H."/>
            <person name="Kitano H."/>
            <person name="Kollias G."/>
            <person name="Krishnan S.P."/>
            <person name="Kruger A."/>
            <person name="Kummerfeld S.K."/>
            <person name="Kurochkin I.V."/>
            <person name="Lareau L.F."/>
            <person name="Lazarevic D."/>
            <person name="Lipovich L."/>
            <person name="Liu J."/>
            <person name="Liuni S."/>
            <person name="McWilliam S."/>
            <person name="Madan Babu M."/>
            <person name="Madera M."/>
            <person name="Marchionni L."/>
            <person name="Matsuda H."/>
            <person name="Matsuzawa S."/>
            <person name="Miki H."/>
            <person name="Mignone F."/>
            <person name="Miyake S."/>
            <person name="Morris K."/>
            <person name="Mottagui-Tabar S."/>
            <person name="Mulder N."/>
            <person name="Nakano N."/>
            <person name="Nakauchi H."/>
            <person name="Ng P."/>
            <person name="Nilsson R."/>
            <person name="Nishiguchi S."/>
            <person name="Nishikawa S."/>
            <person name="Nori F."/>
            <person name="Ohara O."/>
            <person name="Okazaki Y."/>
            <person name="Orlando V."/>
            <person name="Pang K.C."/>
            <person name="Pavan W.J."/>
            <person name="Pavesi G."/>
            <person name="Pesole G."/>
            <person name="Petrovsky N."/>
            <person name="Piazza S."/>
            <person name="Reed J."/>
            <person name="Reid J.F."/>
            <person name="Ring B.Z."/>
            <person name="Ringwald M."/>
            <person name="Rost B."/>
            <person name="Ruan Y."/>
            <person name="Salzberg S.L."/>
            <person name="Sandelin A."/>
            <person name="Schneider C."/>
            <person name="Schoenbach C."/>
            <person name="Sekiguchi K."/>
            <person name="Semple C.A."/>
            <person name="Seno S."/>
            <person name="Sessa L."/>
            <person name="Sheng Y."/>
            <person name="Shibata Y."/>
            <person name="Shimada H."/>
            <person name="Shimada K."/>
            <person name="Silva D."/>
            <person name="Sinclair B."/>
            <person name="Sperling S."/>
            <person name="Stupka E."/>
            <person name="Sugiura K."/>
            <person name="Sultana R."/>
            <person name="Takenaka Y."/>
            <person name="Taki K."/>
            <person name="Tammoja K."/>
            <person name="Tan S.L."/>
            <person name="Tang S."/>
            <person name="Taylor M.S."/>
            <person name="Tegner J."/>
            <person name="Teichmann S.A."/>
            <person name="Ueda H.R."/>
            <person name="van Nimwegen E."/>
            <person name="Verardo R."/>
            <person name="Wei C.L."/>
            <person name="Yagi K."/>
            <person name="Yamanishi H."/>
            <person name="Zabarovsky E."/>
            <person name="Zhu S."/>
            <person name="Zimmer A."/>
            <person name="Hide W."/>
            <person name="Bult C."/>
            <person name="Grimmond S.M."/>
            <person name="Teasdale R.D."/>
            <person name="Liu E.T."/>
            <person name="Brusic V."/>
            <person name="Quackenbush J."/>
            <person name="Wahlestedt C."/>
            <person name="Mattick J.S."/>
            <person name="Hume D.A."/>
            <person name="Kai C."/>
            <person name="Sasaki D."/>
            <person name="Tomaru Y."/>
            <person name="Fukuda S."/>
            <person name="Kanamori-Katayama M."/>
            <person name="Suzuki M."/>
            <person name="Aoki J."/>
            <person name="Arakawa T."/>
            <person name="Iida J."/>
            <person name="Imamura K."/>
            <person name="Itoh M."/>
            <person name="Kato T."/>
            <person name="Kawaji H."/>
            <person name="Kawagashira N."/>
            <person name="Kawashima T."/>
            <person name="Kojima M."/>
            <person name="Kondo S."/>
            <person name="Konno H."/>
            <person name="Nakano K."/>
            <person name="Ninomiya N."/>
            <person name="Nishio T."/>
            <person name="Okada M."/>
            <person name="Plessy C."/>
            <person name="Shibata K."/>
            <person name="Shiraki T."/>
            <person name="Suzuki S."/>
            <person name="Tagami M."/>
            <person name="Waki K."/>
            <person name="Watahiki A."/>
            <person name="Okamura-Oho Y."/>
            <person name="Suzuki H."/>
            <person name="Kawai J."/>
            <person name="Hayashizaki Y."/>
        </authorList>
    </citation>
    <scope>NUCLEOTIDE SEQUENCE [LARGE SCALE MRNA]</scope>
    <source>
        <strain>C57BL/6J</strain>
        <tissue>Thymus</tissue>
    </source>
</reference>
<reference key="2">
    <citation type="journal article" date="2009" name="PLoS Biol.">
        <title>Lineage-specific biology revealed by a finished genome assembly of the mouse.</title>
        <authorList>
            <person name="Church D.M."/>
            <person name="Goodstadt L."/>
            <person name="Hillier L.W."/>
            <person name="Zody M.C."/>
            <person name="Goldstein S."/>
            <person name="She X."/>
            <person name="Bult C.J."/>
            <person name="Agarwala R."/>
            <person name="Cherry J.L."/>
            <person name="DiCuccio M."/>
            <person name="Hlavina W."/>
            <person name="Kapustin Y."/>
            <person name="Meric P."/>
            <person name="Maglott D."/>
            <person name="Birtle Z."/>
            <person name="Marques A.C."/>
            <person name="Graves T."/>
            <person name="Zhou S."/>
            <person name="Teague B."/>
            <person name="Potamousis K."/>
            <person name="Churas C."/>
            <person name="Place M."/>
            <person name="Herschleb J."/>
            <person name="Runnheim R."/>
            <person name="Forrest D."/>
            <person name="Amos-Landgraf J."/>
            <person name="Schwartz D.C."/>
            <person name="Cheng Z."/>
            <person name="Lindblad-Toh K."/>
            <person name="Eichler E.E."/>
            <person name="Ponting C.P."/>
        </authorList>
    </citation>
    <scope>NUCLEOTIDE SEQUENCE [LARGE SCALE GENOMIC DNA]</scope>
    <source>
        <strain>C57BL/6J</strain>
    </source>
</reference>
<reference key="3">
    <citation type="submission" date="2005-09" db="EMBL/GenBank/DDBJ databases">
        <authorList>
            <person name="Mural R.J."/>
            <person name="Adams M.D."/>
            <person name="Myers E.W."/>
            <person name="Smith H.O."/>
            <person name="Venter J.C."/>
        </authorList>
    </citation>
    <scope>NUCLEOTIDE SEQUENCE [LARGE SCALE GENOMIC DNA]</scope>
</reference>
<reference key="4">
    <citation type="journal article" date="2004" name="Genome Res.">
        <title>The status, quality, and expansion of the NIH full-length cDNA project: the Mammalian Gene Collection (MGC).</title>
        <authorList>
            <consortium name="The MGC Project Team"/>
        </authorList>
    </citation>
    <scope>NUCLEOTIDE SEQUENCE [LARGE SCALE MRNA]</scope>
    <source>
        <tissue>Mammary tumor</tissue>
    </source>
</reference>
<reference key="5">
    <citation type="journal article" date="2018" name="Proc. Natl. Acad. Sci. U.S.A.">
        <title>Transmembrane E3 ligase RNF183 mediates ER stress-induced apoptosis by degrading Bcl-xL.</title>
        <authorList>
            <person name="Wu Y."/>
            <person name="Li X."/>
            <person name="Jia J."/>
            <person name="Zhang Y."/>
            <person name="Li J."/>
            <person name="Zhu Z."/>
            <person name="Wang H."/>
            <person name="Tang J."/>
            <person name="Hu J."/>
        </authorList>
    </citation>
    <scope>TISSUE SPECIFICITY</scope>
</reference>
<reference key="6">
    <citation type="journal article" date="2018" name="PLoS ONE">
        <title>Sec16A, a key protein in COPII vesicle formation, regulates the stability and localization of the novel ubiquitin ligase RNF183.</title>
        <authorList>
            <person name="Wu Y."/>
            <person name="Guo X.P."/>
            <person name="Kanemoto S."/>
            <person name="Maeoka Y."/>
            <person name="Saito A."/>
            <person name="Asada R."/>
            <person name="Matsuhisa K."/>
            <person name="Ohtake Y."/>
            <person name="Imaizumi K."/>
            <person name="Kaneko M."/>
        </authorList>
    </citation>
    <scope>FUNCTION</scope>
    <scope>CATALYTIC ACTIVITY</scope>
    <scope>SUBCELLULAR LOCATION</scope>
    <scope>AUTOUBIQUITINATION</scope>
    <scope>TISSUE SPECIFICITY</scope>
    <scope>INTERACTION WITH SEC16A</scope>
    <scope>MUTAGENESIS OF CYS-13 AND CYS-16</scope>
</reference>
<dbReference type="EC" id="2.3.2.27" evidence="4"/>
<dbReference type="EMBL" id="AK017982">
    <property type="protein sequence ID" value="BAC25537.1"/>
    <property type="molecule type" value="mRNA"/>
</dbReference>
<dbReference type="EMBL" id="AL732594">
    <property type="status" value="NOT_ANNOTATED_CDS"/>
    <property type="molecule type" value="Genomic_DNA"/>
</dbReference>
<dbReference type="EMBL" id="CH466527">
    <property type="protein sequence ID" value="EDL31146.1"/>
    <property type="molecule type" value="Genomic_DNA"/>
</dbReference>
<dbReference type="EMBL" id="CH466527">
    <property type="protein sequence ID" value="EDL31147.1"/>
    <property type="molecule type" value="Genomic_DNA"/>
</dbReference>
<dbReference type="EMBL" id="BC025512">
    <property type="protein sequence ID" value="AAH25512.1"/>
    <property type="molecule type" value="mRNA"/>
</dbReference>
<dbReference type="CCDS" id="CCDS38775.1"/>
<dbReference type="RefSeq" id="NP_001366552.1">
    <property type="nucleotide sequence ID" value="NM_001379623.1"/>
</dbReference>
<dbReference type="RefSeq" id="NP_001366553.1">
    <property type="nucleotide sequence ID" value="NM_001379624.1"/>
</dbReference>
<dbReference type="RefSeq" id="NP_001366554.1">
    <property type="nucleotide sequence ID" value="NM_001379625.1"/>
</dbReference>
<dbReference type="RefSeq" id="NP_705724.1">
    <property type="nucleotide sequence ID" value="NM_153504.4"/>
</dbReference>
<dbReference type="RefSeq" id="XP_006538402.1">
    <property type="nucleotide sequence ID" value="XM_006538339.3"/>
</dbReference>
<dbReference type="SMR" id="Q8QZS5"/>
<dbReference type="BioGRID" id="217945">
    <property type="interactions" value="449"/>
</dbReference>
<dbReference type="FunCoup" id="Q8QZS5">
    <property type="interactions" value="117"/>
</dbReference>
<dbReference type="IntAct" id="Q8QZS5">
    <property type="interactions" value="1"/>
</dbReference>
<dbReference type="STRING" id="10090.ENSMUSP00000103079"/>
<dbReference type="PaxDb" id="10090-ENSMUSP00000103079"/>
<dbReference type="Antibodypedia" id="54188">
    <property type="antibodies" value="99 antibodies from 19 providers"/>
</dbReference>
<dbReference type="DNASU" id="76072"/>
<dbReference type="Ensembl" id="ENSMUST00000079420.7">
    <property type="protein sequence ID" value="ENSMUSP00000078389.7"/>
    <property type="gene ID" value="ENSMUSG00000063851.13"/>
</dbReference>
<dbReference type="Ensembl" id="ENSMUST00000107454.2">
    <property type="protein sequence ID" value="ENSMUSP00000103078.2"/>
    <property type="gene ID" value="ENSMUSG00000063851.13"/>
</dbReference>
<dbReference type="Ensembl" id="ENSMUST00000107455.8">
    <property type="protein sequence ID" value="ENSMUSP00000103079.2"/>
    <property type="gene ID" value="ENSMUSG00000063851.13"/>
</dbReference>
<dbReference type="GeneID" id="76072"/>
<dbReference type="KEGG" id="mmu:76072"/>
<dbReference type="UCSC" id="uc008tes.1">
    <property type="organism name" value="mouse"/>
</dbReference>
<dbReference type="AGR" id="MGI:1923322"/>
<dbReference type="CTD" id="138065"/>
<dbReference type="MGI" id="MGI:1923322">
    <property type="gene designation" value="Rnf183"/>
</dbReference>
<dbReference type="VEuPathDB" id="HostDB:ENSMUSG00000063851"/>
<dbReference type="eggNOG" id="KOG2177">
    <property type="taxonomic scope" value="Eukaryota"/>
</dbReference>
<dbReference type="GeneTree" id="ENSGT00940000162965"/>
<dbReference type="HOGENOM" id="CLU_122905_0_0_1"/>
<dbReference type="InParanoid" id="Q8QZS5"/>
<dbReference type="OMA" id="PNHIILE"/>
<dbReference type="OrthoDB" id="252722at2759"/>
<dbReference type="PhylomeDB" id="Q8QZS5"/>
<dbReference type="TreeFam" id="TF337102"/>
<dbReference type="UniPathway" id="UPA00143"/>
<dbReference type="BioGRID-ORCS" id="76072">
    <property type="hits" value="3 hits in 79 CRISPR screens"/>
</dbReference>
<dbReference type="ChiTaRS" id="Rnf183">
    <property type="organism name" value="mouse"/>
</dbReference>
<dbReference type="PRO" id="PR:Q8QZS5"/>
<dbReference type="Proteomes" id="UP000000589">
    <property type="component" value="Chromosome 4"/>
</dbReference>
<dbReference type="RNAct" id="Q8QZS5">
    <property type="molecule type" value="protein"/>
</dbReference>
<dbReference type="Bgee" id="ENSMUSG00000063851">
    <property type="expression patterns" value="Expressed in right kidney and 21 other cell types or tissues"/>
</dbReference>
<dbReference type="GO" id="GO:0033106">
    <property type="term" value="C:cis-Golgi network membrane"/>
    <property type="evidence" value="ECO:0000314"/>
    <property type="project" value="UniProtKB"/>
</dbReference>
<dbReference type="GO" id="GO:0005789">
    <property type="term" value="C:endoplasmic reticulum membrane"/>
    <property type="evidence" value="ECO:0000314"/>
    <property type="project" value="UniProtKB"/>
</dbReference>
<dbReference type="GO" id="GO:0005765">
    <property type="term" value="C:lysosomal membrane"/>
    <property type="evidence" value="ECO:0000314"/>
    <property type="project" value="UniProtKB"/>
</dbReference>
<dbReference type="GO" id="GO:0061630">
    <property type="term" value="F:ubiquitin protein ligase activity"/>
    <property type="evidence" value="ECO:0000315"/>
    <property type="project" value="UniProtKB"/>
</dbReference>
<dbReference type="GO" id="GO:0008270">
    <property type="term" value="F:zinc ion binding"/>
    <property type="evidence" value="ECO:0007669"/>
    <property type="project" value="UniProtKB-KW"/>
</dbReference>
<dbReference type="GO" id="GO:0006915">
    <property type="term" value="P:apoptotic process"/>
    <property type="evidence" value="ECO:0007669"/>
    <property type="project" value="UniProtKB-KW"/>
</dbReference>
<dbReference type="GO" id="GO:1902237">
    <property type="term" value="P:positive regulation of endoplasmic reticulum stress-induced intrinsic apoptotic signaling pathway"/>
    <property type="evidence" value="ECO:0007669"/>
    <property type="project" value="Ensembl"/>
</dbReference>
<dbReference type="GO" id="GO:0051865">
    <property type="term" value="P:protein autoubiquitination"/>
    <property type="evidence" value="ECO:0000315"/>
    <property type="project" value="UniProtKB"/>
</dbReference>
<dbReference type="GO" id="GO:0000209">
    <property type="term" value="P:protein polyubiquitination"/>
    <property type="evidence" value="ECO:0000250"/>
    <property type="project" value="UniProtKB"/>
</dbReference>
<dbReference type="GO" id="GO:0034976">
    <property type="term" value="P:response to endoplasmic reticulum stress"/>
    <property type="evidence" value="ECO:0007669"/>
    <property type="project" value="Ensembl"/>
</dbReference>
<dbReference type="CDD" id="cd16556">
    <property type="entry name" value="RING-HC_RNF183-like"/>
    <property type="match status" value="1"/>
</dbReference>
<dbReference type="FunFam" id="3.30.40.10:FF:000409">
    <property type="entry name" value="probable E3 ubiquitin-protein ligase RNF183"/>
    <property type="match status" value="1"/>
</dbReference>
<dbReference type="Gene3D" id="3.30.40.10">
    <property type="entry name" value="Zinc/RING finger domain, C3HC4 (zinc finger)"/>
    <property type="match status" value="1"/>
</dbReference>
<dbReference type="InterPro" id="IPR051435">
    <property type="entry name" value="RING_finger_E3_ubiq-ligases"/>
</dbReference>
<dbReference type="InterPro" id="IPR001841">
    <property type="entry name" value="Znf_RING"/>
</dbReference>
<dbReference type="InterPro" id="IPR013083">
    <property type="entry name" value="Znf_RING/FYVE/PHD"/>
</dbReference>
<dbReference type="InterPro" id="IPR017907">
    <property type="entry name" value="Znf_RING_CS"/>
</dbReference>
<dbReference type="PANTHER" id="PTHR22791:SF7">
    <property type="entry name" value="E3 UBIQUITIN-PROTEIN LIGASE RNF183"/>
    <property type="match status" value="1"/>
</dbReference>
<dbReference type="PANTHER" id="PTHR22791">
    <property type="entry name" value="RING-TYPE DOMAIN-CONTAINING PROTEIN"/>
    <property type="match status" value="1"/>
</dbReference>
<dbReference type="Pfam" id="PF13639">
    <property type="entry name" value="zf-RING_2"/>
    <property type="match status" value="1"/>
</dbReference>
<dbReference type="SMART" id="SM00184">
    <property type="entry name" value="RING"/>
    <property type="match status" value="1"/>
</dbReference>
<dbReference type="SUPFAM" id="SSF57850">
    <property type="entry name" value="RING/U-box"/>
    <property type="match status" value="1"/>
</dbReference>
<dbReference type="PROSITE" id="PS00518">
    <property type="entry name" value="ZF_RING_1"/>
    <property type="match status" value="1"/>
</dbReference>
<dbReference type="PROSITE" id="PS50089">
    <property type="entry name" value="ZF_RING_2"/>
    <property type="match status" value="1"/>
</dbReference>
<evidence type="ECO:0000250" key="1">
    <source>
        <dbReference type="UniProtKB" id="Q96D59"/>
    </source>
</evidence>
<evidence type="ECO:0000255" key="2"/>
<evidence type="ECO:0000255" key="3">
    <source>
        <dbReference type="PROSITE-ProRule" id="PRU00175"/>
    </source>
</evidence>
<evidence type="ECO:0000269" key="4">
    <source>
    </source>
</evidence>
<evidence type="ECO:0000269" key="5">
    <source>
    </source>
</evidence>
<evidence type="ECO:0000305" key="6"/>
<comment type="function">
    <text evidence="1 4">Acts as an E3 ubiquitin ligase catalyzing the covalent attachment of ubiquitin moieties onto substrate proteins (PubMed:29300766). Triggers apoptosis in response to prolonged ER stress by mediating the polyubiquitination and subsequent proteasomal degradation of BCL2L1 (By similarity). May collaborate with FATE1 to restrain BIK protein levels thus regulating apoptotic signaling (By similarity).</text>
</comment>
<comment type="catalytic activity">
    <reaction evidence="4">
        <text>S-ubiquitinyl-[E2 ubiquitin-conjugating enzyme]-L-cysteine + [acceptor protein]-L-lysine = [E2 ubiquitin-conjugating enzyme]-L-cysteine + N(6)-ubiquitinyl-[acceptor protein]-L-lysine.</text>
        <dbReference type="EC" id="2.3.2.27"/>
    </reaction>
</comment>
<comment type="pathway">
    <text evidence="4">Protein modification; protein ubiquitination.</text>
</comment>
<comment type="subunit">
    <text evidence="1 4">Interacts with FATE1 (By similarity). Interacts with SEC16A (PubMed:29300766). Interacts with BCL2L1 (By similarity).</text>
</comment>
<comment type="subcellular location">
    <subcellularLocation>
        <location evidence="4">Endoplasmic reticulum membrane</location>
        <topology evidence="1">Single-pass type IV membrane protein</topology>
    </subcellularLocation>
    <subcellularLocation>
        <location evidence="1">Endoplasmic reticulum</location>
    </subcellularLocation>
    <subcellularLocation>
        <location evidence="4">Golgi apparatus</location>
        <location evidence="4">cis-Golgi network membrane</location>
    </subcellularLocation>
    <subcellularLocation>
        <location evidence="4">Lysosome membrane</location>
    </subcellularLocation>
</comment>
<comment type="tissue specificity">
    <text evidence="4 5">Highly expressed in the kidney and testis.</text>
</comment>
<comment type="PTM">
    <text evidence="4">Autoubiquitinated (in vitro).</text>
</comment>
<keyword id="KW-0053">Apoptosis</keyword>
<keyword id="KW-0256">Endoplasmic reticulum</keyword>
<keyword id="KW-0333">Golgi apparatus</keyword>
<keyword id="KW-0458">Lysosome</keyword>
<keyword id="KW-0472">Membrane</keyword>
<keyword id="KW-0479">Metal-binding</keyword>
<keyword id="KW-1185">Reference proteome</keyword>
<keyword id="KW-0808">Transferase</keyword>
<keyword id="KW-0812">Transmembrane</keyword>
<keyword id="KW-1133">Transmembrane helix</keyword>
<keyword id="KW-0832">Ubl conjugation</keyword>
<keyword id="KW-0833">Ubl conjugation pathway</keyword>
<keyword id="KW-0862">Zinc</keyword>
<keyword id="KW-0863">Zinc-finger</keyword>
<feature type="chain" id="PRO_0000247359" description="E3 ubiquitin-protein ligase RNF183">
    <location>
        <begin position="1"/>
        <end position="190"/>
    </location>
</feature>
<feature type="topological domain" description="Cytoplasmic" evidence="6">
    <location>
        <begin position="1"/>
        <end position="159"/>
    </location>
</feature>
<feature type="transmembrane region" description="Helical; Anchor for type IV membrane protein" evidence="2">
    <location>
        <begin position="160"/>
        <end position="180"/>
    </location>
</feature>
<feature type="topological domain" description="Lumenal" evidence="6">
    <location>
        <begin position="181"/>
        <end position="190"/>
    </location>
</feature>
<feature type="zinc finger region" description="RING-type" evidence="3">
    <location>
        <begin position="13"/>
        <end position="60"/>
    </location>
</feature>
<feature type="mutagenesis site" description="Decrease in autoubiquitination; when associated with S-16." evidence="4">
    <original>C</original>
    <variation>S</variation>
    <location>
        <position position="13"/>
    </location>
</feature>
<feature type="mutagenesis site" description="Decrease in autoubiquitination; when associated with S-13." evidence="4">
    <original>C</original>
    <variation>S</variation>
    <location>
        <position position="16"/>
    </location>
</feature>
<accession>Q8QZS5</accession>
<accession>B7ZCH3</accession>
<accession>Q5NBV8</accession>
<proteinExistence type="evidence at protein level"/>
<name>RN183_MOUSE</name>